<proteinExistence type="inferred from homology"/>
<name>LPXB_YERPE</name>
<sequence>MQNSPLTADCSLNAGRPLTIGLVAGETSGDILGAGLIRALKVQVPNARFVGVAGPLMQAEGCEAWYEMEELAVMGVVEVLERLPRLLKIRKDLTQRFSELSPDVFVGIDAPDFNITLEGRLKQRGIRTIHYVSPSVWAWRQKRVFKIGKATDMVLAFLPFEKAFYDRFNVPCRFIGHTMADAMPLVPDQQAARAELGIAPNATCLALLPGSRHSEVEMLSADFLRTAVILRDKLPNLEVVVPLVNSKRREQFERIKAEIAPDLSVHLLDGKARVAMIASDAALLASGTAALECMLAKCPMVVGYRMKPFTFWLAERLVKTPYVSLPNLLAGEELVTELLQQECQPQKLAGALLPLLQGGSEIAALKERFLVLHQSIRCGADEQAAQAVLELADR</sequence>
<accession>Q8ZH55</accession>
<accession>Q0WHY8</accession>
<keyword id="KW-0328">Glycosyltransferase</keyword>
<keyword id="KW-0441">Lipid A biosynthesis</keyword>
<keyword id="KW-0444">Lipid biosynthesis</keyword>
<keyword id="KW-0443">Lipid metabolism</keyword>
<keyword id="KW-1185">Reference proteome</keyword>
<keyword id="KW-0808">Transferase</keyword>
<reference key="1">
    <citation type="journal article" date="2001" name="Nature">
        <title>Genome sequence of Yersinia pestis, the causative agent of plague.</title>
        <authorList>
            <person name="Parkhill J."/>
            <person name="Wren B.W."/>
            <person name="Thomson N.R."/>
            <person name="Titball R.W."/>
            <person name="Holden M.T.G."/>
            <person name="Prentice M.B."/>
            <person name="Sebaihia M."/>
            <person name="James K.D."/>
            <person name="Churcher C.M."/>
            <person name="Mungall K.L."/>
            <person name="Baker S."/>
            <person name="Basham D."/>
            <person name="Bentley S.D."/>
            <person name="Brooks K."/>
            <person name="Cerdeno-Tarraga A.-M."/>
            <person name="Chillingworth T."/>
            <person name="Cronin A."/>
            <person name="Davies R.M."/>
            <person name="Davis P."/>
            <person name="Dougan G."/>
            <person name="Feltwell T."/>
            <person name="Hamlin N."/>
            <person name="Holroyd S."/>
            <person name="Jagels K."/>
            <person name="Karlyshev A.V."/>
            <person name="Leather S."/>
            <person name="Moule S."/>
            <person name="Oyston P.C.F."/>
            <person name="Quail M.A."/>
            <person name="Rutherford K.M."/>
            <person name="Simmonds M."/>
            <person name="Skelton J."/>
            <person name="Stevens K."/>
            <person name="Whitehead S."/>
            <person name="Barrell B.G."/>
        </authorList>
    </citation>
    <scope>NUCLEOTIDE SEQUENCE [LARGE SCALE GENOMIC DNA]</scope>
    <source>
        <strain>CO-92 / Biovar Orientalis</strain>
    </source>
</reference>
<reference key="2">
    <citation type="journal article" date="2002" name="J. Bacteriol.">
        <title>Genome sequence of Yersinia pestis KIM.</title>
        <authorList>
            <person name="Deng W."/>
            <person name="Burland V."/>
            <person name="Plunkett G. III"/>
            <person name="Boutin A."/>
            <person name="Mayhew G.F."/>
            <person name="Liss P."/>
            <person name="Perna N.T."/>
            <person name="Rose D.J."/>
            <person name="Mau B."/>
            <person name="Zhou S."/>
            <person name="Schwartz D.C."/>
            <person name="Fetherston J.D."/>
            <person name="Lindler L.E."/>
            <person name="Brubaker R.R."/>
            <person name="Plano G.V."/>
            <person name="Straley S.C."/>
            <person name="McDonough K.A."/>
            <person name="Nilles M.L."/>
            <person name="Matson J.S."/>
            <person name="Blattner F.R."/>
            <person name="Perry R.D."/>
        </authorList>
    </citation>
    <scope>NUCLEOTIDE SEQUENCE [LARGE SCALE GENOMIC DNA]</scope>
    <source>
        <strain>KIM10+ / Biovar Mediaevalis</strain>
    </source>
</reference>
<reference key="3">
    <citation type="journal article" date="2004" name="DNA Res.">
        <title>Complete genome sequence of Yersinia pestis strain 91001, an isolate avirulent to humans.</title>
        <authorList>
            <person name="Song Y."/>
            <person name="Tong Z."/>
            <person name="Wang J."/>
            <person name="Wang L."/>
            <person name="Guo Z."/>
            <person name="Han Y."/>
            <person name="Zhang J."/>
            <person name="Pei D."/>
            <person name="Zhou D."/>
            <person name="Qin H."/>
            <person name="Pang X."/>
            <person name="Han Y."/>
            <person name="Zhai J."/>
            <person name="Li M."/>
            <person name="Cui B."/>
            <person name="Qi Z."/>
            <person name="Jin L."/>
            <person name="Dai R."/>
            <person name="Chen F."/>
            <person name="Li S."/>
            <person name="Ye C."/>
            <person name="Du Z."/>
            <person name="Lin W."/>
            <person name="Wang J."/>
            <person name="Yu J."/>
            <person name="Yang H."/>
            <person name="Wang J."/>
            <person name="Huang P."/>
            <person name="Yang R."/>
        </authorList>
    </citation>
    <scope>NUCLEOTIDE SEQUENCE [LARGE SCALE GENOMIC DNA]</scope>
    <source>
        <strain>91001 / Biovar Mediaevalis</strain>
    </source>
</reference>
<comment type="function">
    <text evidence="1">Condensation of UDP-2,3-diacylglucosamine and 2,3-diacylglucosamine-1-phosphate to form lipid A disaccharide, a precursor of lipid A, a phosphorylated glycolipid that anchors the lipopolysaccharide to the outer membrane of the cell.</text>
</comment>
<comment type="catalytic activity">
    <reaction evidence="1">
        <text>2-N,3-O-bis[(3R)-3-hydroxytetradecanoyl]-alpha-D-glucosaminyl 1-phosphate + UDP-2-N,3-O-bis[(3R)-3-hydroxytetradecanoyl]-alpha-D-glucosamine = lipid A disaccharide (E. coli) + UDP + H(+)</text>
        <dbReference type="Rhea" id="RHEA:22668"/>
        <dbReference type="ChEBI" id="CHEBI:15378"/>
        <dbReference type="ChEBI" id="CHEBI:57957"/>
        <dbReference type="ChEBI" id="CHEBI:58223"/>
        <dbReference type="ChEBI" id="CHEBI:58466"/>
        <dbReference type="ChEBI" id="CHEBI:78847"/>
    </reaction>
</comment>
<comment type="catalytic activity">
    <reaction evidence="1">
        <text>a lipid X + a UDP-2-N,3-O-bis[(3R)-3-hydroxyacyl]-alpha-D-glucosamine = a lipid A disaccharide + UDP + H(+)</text>
        <dbReference type="Rhea" id="RHEA:67828"/>
        <dbReference type="ChEBI" id="CHEBI:15378"/>
        <dbReference type="ChEBI" id="CHEBI:58223"/>
        <dbReference type="ChEBI" id="CHEBI:137748"/>
        <dbReference type="ChEBI" id="CHEBI:176338"/>
        <dbReference type="ChEBI" id="CHEBI:176343"/>
        <dbReference type="EC" id="2.4.1.182"/>
    </reaction>
</comment>
<comment type="pathway">
    <text evidence="1">Glycolipid biosynthesis; lipid IV(A) biosynthesis; lipid IV(A) from (3R)-3-hydroxytetradecanoyl-[acyl-carrier-protein] and UDP-N-acetyl-alpha-D-glucosamine: step 5/6.</text>
</comment>
<comment type="similarity">
    <text evidence="1">Belongs to the LpxB family.</text>
</comment>
<protein>
    <recommendedName>
        <fullName evidence="1">Lipid-A-disaccharide synthase</fullName>
        <ecNumber evidence="1">2.4.1.182</ecNumber>
    </recommendedName>
</protein>
<dbReference type="EC" id="2.4.1.182" evidence="1"/>
<dbReference type="EMBL" id="AL590842">
    <property type="protein sequence ID" value="CAL19722.1"/>
    <property type="molecule type" value="Genomic_DNA"/>
</dbReference>
<dbReference type="EMBL" id="AE009952">
    <property type="protein sequence ID" value="AAM86672.1"/>
    <property type="molecule type" value="Genomic_DNA"/>
</dbReference>
<dbReference type="EMBL" id="AE017042">
    <property type="protein sequence ID" value="AAS62977.1"/>
    <property type="molecule type" value="Genomic_DNA"/>
</dbReference>
<dbReference type="PIR" id="AH0129">
    <property type="entry name" value="AH0129"/>
</dbReference>
<dbReference type="RefSeq" id="WP_002212144.1">
    <property type="nucleotide sequence ID" value="NZ_WUCM01000044.1"/>
</dbReference>
<dbReference type="RefSeq" id="YP_002346100.1">
    <property type="nucleotide sequence ID" value="NC_003143.1"/>
</dbReference>
<dbReference type="SMR" id="Q8ZH55"/>
<dbReference type="STRING" id="214092.YPO1057"/>
<dbReference type="CAZy" id="GT19">
    <property type="family name" value="Glycosyltransferase Family 19"/>
</dbReference>
<dbReference type="PaxDb" id="214092-YPO1057"/>
<dbReference type="DNASU" id="1148069"/>
<dbReference type="EnsemblBacteria" id="AAS62977">
    <property type="protein sequence ID" value="AAS62977"/>
    <property type="gene ID" value="YP_2793"/>
</dbReference>
<dbReference type="GeneID" id="57977504"/>
<dbReference type="KEGG" id="ype:YPO1057"/>
<dbReference type="KEGG" id="ypk:y3122"/>
<dbReference type="KEGG" id="ypm:YP_2793"/>
<dbReference type="PATRIC" id="fig|214092.21.peg.1345"/>
<dbReference type="eggNOG" id="COG0763">
    <property type="taxonomic scope" value="Bacteria"/>
</dbReference>
<dbReference type="HOGENOM" id="CLU_036577_3_0_6"/>
<dbReference type="OMA" id="YVILPFE"/>
<dbReference type="UniPathway" id="UPA00359">
    <property type="reaction ID" value="UER00481"/>
</dbReference>
<dbReference type="Proteomes" id="UP000000815">
    <property type="component" value="Chromosome"/>
</dbReference>
<dbReference type="Proteomes" id="UP000001019">
    <property type="component" value="Chromosome"/>
</dbReference>
<dbReference type="Proteomes" id="UP000002490">
    <property type="component" value="Chromosome"/>
</dbReference>
<dbReference type="GO" id="GO:0016020">
    <property type="term" value="C:membrane"/>
    <property type="evidence" value="ECO:0007669"/>
    <property type="project" value="GOC"/>
</dbReference>
<dbReference type="GO" id="GO:0008915">
    <property type="term" value="F:lipid-A-disaccharide synthase activity"/>
    <property type="evidence" value="ECO:0007669"/>
    <property type="project" value="UniProtKB-UniRule"/>
</dbReference>
<dbReference type="GO" id="GO:0005543">
    <property type="term" value="F:phospholipid binding"/>
    <property type="evidence" value="ECO:0000318"/>
    <property type="project" value="GO_Central"/>
</dbReference>
<dbReference type="GO" id="GO:0009245">
    <property type="term" value="P:lipid A biosynthetic process"/>
    <property type="evidence" value="ECO:0000318"/>
    <property type="project" value="GO_Central"/>
</dbReference>
<dbReference type="CDD" id="cd01635">
    <property type="entry name" value="Glycosyltransferase_GTB-type"/>
    <property type="match status" value="1"/>
</dbReference>
<dbReference type="HAMAP" id="MF_00392">
    <property type="entry name" value="LpxB"/>
    <property type="match status" value="1"/>
</dbReference>
<dbReference type="InterPro" id="IPR003835">
    <property type="entry name" value="Glyco_trans_19"/>
</dbReference>
<dbReference type="NCBIfam" id="TIGR00215">
    <property type="entry name" value="lpxB"/>
    <property type="match status" value="1"/>
</dbReference>
<dbReference type="PANTHER" id="PTHR30372">
    <property type="entry name" value="LIPID-A-DISACCHARIDE SYNTHASE"/>
    <property type="match status" value="1"/>
</dbReference>
<dbReference type="PANTHER" id="PTHR30372:SF4">
    <property type="entry name" value="LIPID-A-DISACCHARIDE SYNTHASE, MITOCHONDRIAL-RELATED"/>
    <property type="match status" value="1"/>
</dbReference>
<dbReference type="Pfam" id="PF02684">
    <property type="entry name" value="LpxB"/>
    <property type="match status" value="1"/>
</dbReference>
<dbReference type="SUPFAM" id="SSF53756">
    <property type="entry name" value="UDP-Glycosyltransferase/glycogen phosphorylase"/>
    <property type="match status" value="1"/>
</dbReference>
<organism>
    <name type="scientific">Yersinia pestis</name>
    <dbReference type="NCBI Taxonomy" id="632"/>
    <lineage>
        <taxon>Bacteria</taxon>
        <taxon>Pseudomonadati</taxon>
        <taxon>Pseudomonadota</taxon>
        <taxon>Gammaproteobacteria</taxon>
        <taxon>Enterobacterales</taxon>
        <taxon>Yersiniaceae</taxon>
        <taxon>Yersinia</taxon>
    </lineage>
</organism>
<feature type="chain" id="PRO_0000190197" description="Lipid-A-disaccharide synthase">
    <location>
        <begin position="1"/>
        <end position="394"/>
    </location>
</feature>
<gene>
    <name evidence="1" type="primary">lpxB</name>
    <name type="ordered locus">YPO1057</name>
    <name type="ordered locus">y3122</name>
    <name type="ordered locus">YP_2793</name>
</gene>
<evidence type="ECO:0000255" key="1">
    <source>
        <dbReference type="HAMAP-Rule" id="MF_00392"/>
    </source>
</evidence>